<proteinExistence type="inferred from homology"/>
<feature type="chain" id="PRO_1000192111" description="UDP-N-acetylmuramate--L-alanine ligase">
    <location>
        <begin position="1"/>
        <end position="437"/>
    </location>
</feature>
<feature type="binding site" evidence="1">
    <location>
        <begin position="108"/>
        <end position="114"/>
    </location>
    <ligand>
        <name>ATP</name>
        <dbReference type="ChEBI" id="CHEBI:30616"/>
    </ligand>
</feature>
<comment type="function">
    <text evidence="1">Cell wall formation.</text>
</comment>
<comment type="catalytic activity">
    <reaction evidence="1">
        <text>UDP-N-acetyl-alpha-D-muramate + L-alanine + ATP = UDP-N-acetyl-alpha-D-muramoyl-L-alanine + ADP + phosphate + H(+)</text>
        <dbReference type="Rhea" id="RHEA:23372"/>
        <dbReference type="ChEBI" id="CHEBI:15378"/>
        <dbReference type="ChEBI" id="CHEBI:30616"/>
        <dbReference type="ChEBI" id="CHEBI:43474"/>
        <dbReference type="ChEBI" id="CHEBI:57972"/>
        <dbReference type="ChEBI" id="CHEBI:70757"/>
        <dbReference type="ChEBI" id="CHEBI:83898"/>
        <dbReference type="ChEBI" id="CHEBI:456216"/>
        <dbReference type="EC" id="6.3.2.8"/>
    </reaction>
</comment>
<comment type="pathway">
    <text evidence="1">Cell wall biogenesis; peptidoglycan biosynthesis.</text>
</comment>
<comment type="subcellular location">
    <subcellularLocation>
        <location evidence="1">Cytoplasm</location>
    </subcellularLocation>
</comment>
<comment type="similarity">
    <text evidence="1">Belongs to the MurCDEF family.</text>
</comment>
<gene>
    <name evidence="1" type="primary">murC</name>
    <name type="ordered locus">Sca_1347</name>
</gene>
<organism>
    <name type="scientific">Staphylococcus carnosus (strain TM300)</name>
    <dbReference type="NCBI Taxonomy" id="396513"/>
    <lineage>
        <taxon>Bacteria</taxon>
        <taxon>Bacillati</taxon>
        <taxon>Bacillota</taxon>
        <taxon>Bacilli</taxon>
        <taxon>Bacillales</taxon>
        <taxon>Staphylococcaceae</taxon>
        <taxon>Staphylococcus</taxon>
    </lineage>
</organism>
<name>MURC_STACT</name>
<evidence type="ECO:0000255" key="1">
    <source>
        <dbReference type="HAMAP-Rule" id="MF_00046"/>
    </source>
</evidence>
<sequence length="437" mass="49662">MTHYHFVGIKGSGMSSLAQIMHDLGHEVQGSDIDQYVFTEKALRNKGIKILPFNPDNIEKGMTIIQGNAFSDTHEEIVRAHELDLEVIDYPTFLGHVIEQYISIAVTGAHGKTSTTGLLSHVMNGDKRTSFLIGDGTGLGIPQSEFFAFEACEYRRHFLSYHPDYAIMTNIDFDHPDYFKDVDDVTNAFQEMAYNVKKGIVAWGKDEHLRKIKADVPIYYYGLEKNEDIYADNIQITEHGTQFDVYIDGKYFDQFLSPQYGDHNILNTLAVIMVCHLEGLDIENIKEALETFGGVKRRFNETKLHNQVLVDDYAHHPREINATIETARKKYPNKEVIAVFQPHTFSRTKAFLEEFAESLSKADRVFLCDIFGSIREHDGSLTIQDLIDRIPGAQLIGENNVNILNEFDNAVILFMGAGDIQKIERAYMENNGVTNEF</sequence>
<dbReference type="EC" id="6.3.2.8" evidence="1"/>
<dbReference type="EMBL" id="AM295250">
    <property type="protein sequence ID" value="CAL28251.1"/>
    <property type="molecule type" value="Genomic_DNA"/>
</dbReference>
<dbReference type="RefSeq" id="WP_015900591.1">
    <property type="nucleotide sequence ID" value="NC_012121.1"/>
</dbReference>
<dbReference type="SMR" id="B9DN57"/>
<dbReference type="GeneID" id="93793765"/>
<dbReference type="KEGG" id="sca:SCA_1347"/>
<dbReference type="eggNOG" id="COG0773">
    <property type="taxonomic scope" value="Bacteria"/>
</dbReference>
<dbReference type="HOGENOM" id="CLU_028104_1_0_9"/>
<dbReference type="OrthoDB" id="9804126at2"/>
<dbReference type="BioCyc" id="SCAR396513:SCA_RS06690-MONOMER"/>
<dbReference type="UniPathway" id="UPA00219"/>
<dbReference type="Proteomes" id="UP000000444">
    <property type="component" value="Chromosome"/>
</dbReference>
<dbReference type="GO" id="GO:0005737">
    <property type="term" value="C:cytoplasm"/>
    <property type="evidence" value="ECO:0007669"/>
    <property type="project" value="UniProtKB-SubCell"/>
</dbReference>
<dbReference type="GO" id="GO:0005524">
    <property type="term" value="F:ATP binding"/>
    <property type="evidence" value="ECO:0007669"/>
    <property type="project" value="UniProtKB-UniRule"/>
</dbReference>
<dbReference type="GO" id="GO:0008763">
    <property type="term" value="F:UDP-N-acetylmuramate-L-alanine ligase activity"/>
    <property type="evidence" value="ECO:0007669"/>
    <property type="project" value="UniProtKB-UniRule"/>
</dbReference>
<dbReference type="GO" id="GO:0051301">
    <property type="term" value="P:cell division"/>
    <property type="evidence" value="ECO:0007669"/>
    <property type="project" value="UniProtKB-KW"/>
</dbReference>
<dbReference type="GO" id="GO:0071555">
    <property type="term" value="P:cell wall organization"/>
    <property type="evidence" value="ECO:0007669"/>
    <property type="project" value="UniProtKB-KW"/>
</dbReference>
<dbReference type="GO" id="GO:0009252">
    <property type="term" value="P:peptidoglycan biosynthetic process"/>
    <property type="evidence" value="ECO:0007669"/>
    <property type="project" value="UniProtKB-UniRule"/>
</dbReference>
<dbReference type="GO" id="GO:0008360">
    <property type="term" value="P:regulation of cell shape"/>
    <property type="evidence" value="ECO:0007669"/>
    <property type="project" value="UniProtKB-KW"/>
</dbReference>
<dbReference type="Gene3D" id="3.90.190.20">
    <property type="entry name" value="Mur ligase, C-terminal domain"/>
    <property type="match status" value="1"/>
</dbReference>
<dbReference type="Gene3D" id="3.40.1190.10">
    <property type="entry name" value="Mur-like, catalytic domain"/>
    <property type="match status" value="1"/>
</dbReference>
<dbReference type="Gene3D" id="3.40.50.720">
    <property type="entry name" value="NAD(P)-binding Rossmann-like Domain"/>
    <property type="match status" value="1"/>
</dbReference>
<dbReference type="HAMAP" id="MF_00046">
    <property type="entry name" value="MurC"/>
    <property type="match status" value="1"/>
</dbReference>
<dbReference type="InterPro" id="IPR036565">
    <property type="entry name" value="Mur-like_cat_sf"/>
</dbReference>
<dbReference type="InterPro" id="IPR004101">
    <property type="entry name" value="Mur_ligase_C"/>
</dbReference>
<dbReference type="InterPro" id="IPR036615">
    <property type="entry name" value="Mur_ligase_C_dom_sf"/>
</dbReference>
<dbReference type="InterPro" id="IPR013221">
    <property type="entry name" value="Mur_ligase_cen"/>
</dbReference>
<dbReference type="InterPro" id="IPR000713">
    <property type="entry name" value="Mur_ligase_N"/>
</dbReference>
<dbReference type="InterPro" id="IPR050061">
    <property type="entry name" value="MurCDEF_pg_biosynth"/>
</dbReference>
<dbReference type="InterPro" id="IPR005758">
    <property type="entry name" value="UDP-N-AcMur_Ala_ligase_MurC"/>
</dbReference>
<dbReference type="NCBIfam" id="TIGR01082">
    <property type="entry name" value="murC"/>
    <property type="match status" value="1"/>
</dbReference>
<dbReference type="PANTHER" id="PTHR43445:SF3">
    <property type="entry name" value="UDP-N-ACETYLMURAMATE--L-ALANINE LIGASE"/>
    <property type="match status" value="1"/>
</dbReference>
<dbReference type="PANTHER" id="PTHR43445">
    <property type="entry name" value="UDP-N-ACETYLMURAMATE--L-ALANINE LIGASE-RELATED"/>
    <property type="match status" value="1"/>
</dbReference>
<dbReference type="Pfam" id="PF01225">
    <property type="entry name" value="Mur_ligase"/>
    <property type="match status" value="1"/>
</dbReference>
<dbReference type="Pfam" id="PF02875">
    <property type="entry name" value="Mur_ligase_C"/>
    <property type="match status" value="1"/>
</dbReference>
<dbReference type="Pfam" id="PF08245">
    <property type="entry name" value="Mur_ligase_M"/>
    <property type="match status" value="1"/>
</dbReference>
<dbReference type="SUPFAM" id="SSF51984">
    <property type="entry name" value="MurCD N-terminal domain"/>
    <property type="match status" value="1"/>
</dbReference>
<dbReference type="SUPFAM" id="SSF53623">
    <property type="entry name" value="MurD-like peptide ligases, catalytic domain"/>
    <property type="match status" value="1"/>
</dbReference>
<dbReference type="SUPFAM" id="SSF53244">
    <property type="entry name" value="MurD-like peptide ligases, peptide-binding domain"/>
    <property type="match status" value="1"/>
</dbReference>
<accession>B9DN57</accession>
<keyword id="KW-0067">ATP-binding</keyword>
<keyword id="KW-0131">Cell cycle</keyword>
<keyword id="KW-0132">Cell division</keyword>
<keyword id="KW-0133">Cell shape</keyword>
<keyword id="KW-0961">Cell wall biogenesis/degradation</keyword>
<keyword id="KW-0963">Cytoplasm</keyword>
<keyword id="KW-0436">Ligase</keyword>
<keyword id="KW-0547">Nucleotide-binding</keyword>
<keyword id="KW-0573">Peptidoglycan synthesis</keyword>
<keyword id="KW-1185">Reference proteome</keyword>
<protein>
    <recommendedName>
        <fullName evidence="1">UDP-N-acetylmuramate--L-alanine ligase</fullName>
        <ecNumber evidence="1">6.3.2.8</ecNumber>
    </recommendedName>
    <alternativeName>
        <fullName evidence="1">UDP-N-acetylmuramoyl-L-alanine synthetase</fullName>
    </alternativeName>
</protein>
<reference key="1">
    <citation type="journal article" date="2009" name="Appl. Environ. Microbiol.">
        <title>Genome analysis of the meat starter culture bacterium Staphylococcus carnosus TM300.</title>
        <authorList>
            <person name="Rosenstein R."/>
            <person name="Nerz C."/>
            <person name="Biswas L."/>
            <person name="Resch A."/>
            <person name="Raddatz G."/>
            <person name="Schuster S.C."/>
            <person name="Goetz F."/>
        </authorList>
    </citation>
    <scope>NUCLEOTIDE SEQUENCE [LARGE SCALE GENOMIC DNA]</scope>
    <source>
        <strain>TM300</strain>
    </source>
</reference>